<name>VNPB_PSEAU</name>
<keyword id="KW-1015">Disulfide bond</keyword>
<keyword id="KW-0382">Hypotensive agent</keyword>
<keyword id="KW-0964">Secreted</keyword>
<keyword id="KW-0800">Toxin</keyword>
<keyword id="KW-0838">Vasoactive</keyword>
<keyword id="KW-0840">Vasodilator</keyword>
<evidence type="ECO:0000250" key="1">
    <source>
        <dbReference type="UniProtKB" id="C6EVG7"/>
    </source>
</evidence>
<evidence type="ECO:0000250" key="2">
    <source>
        <dbReference type="UniProtKB" id="P83228"/>
    </source>
</evidence>
<evidence type="ECO:0000250" key="3">
    <source>
        <dbReference type="UniProtKB" id="Q3SAE9"/>
    </source>
</evidence>
<evidence type="ECO:0000303" key="4">
    <source>
    </source>
</evidence>
<evidence type="ECO:0000305" key="5"/>
<evidence type="ECO:0000305" key="6">
    <source>
    </source>
</evidence>
<comment type="function">
    <text evidence="1 3">Snake venom natriuretic peptide that targets both NPR1 and NPR2 (By similarity). Exhibits hypotensive and vasodepressor activities (By similarity).</text>
</comment>
<comment type="subcellular location">
    <subcellularLocation>
        <location evidence="6">Secreted</location>
    </subcellularLocation>
</comment>
<comment type="tissue specificity">
    <text evidence="6">Expressed by the venom gland.</text>
</comment>
<comment type="similarity">
    <text evidence="5">Belongs to the natriuretic peptide family.</text>
</comment>
<feature type="peptide" id="PRO_5000140404" description="Natriuretic peptide PaNP-b" evidence="2">
    <location>
        <begin position="1" status="less than"/>
        <end position="35"/>
    </location>
</feature>
<feature type="propeptide" id="PRO_0000342423" evidence="2">
    <location>
        <begin position="36"/>
        <end position="40"/>
    </location>
</feature>
<feature type="disulfide bond" evidence="2">
    <location>
        <begin position="9"/>
        <end position="25"/>
    </location>
</feature>
<feature type="non-terminal residue">
    <location>
        <position position="1"/>
    </location>
</feature>
<reference key="1">
    <citation type="journal article" date="2006" name="Biochimie">
        <title>Cloning and characterisation of natriuretic peptides from the venom glands of Australian elapids.</title>
        <authorList>
            <person name="St Pierre L."/>
            <person name="Flight S."/>
            <person name="Masci P.P."/>
            <person name="Hanchard K.J."/>
            <person name="Lewis R.J."/>
            <person name="Alewood P.F."/>
            <person name="de Jersey J."/>
            <person name="Lavin M.F."/>
        </authorList>
    </citation>
    <scope>NUCLEOTIDE SEQUENCE [MRNA]</scope>
    <source>
        <tissue>Venom gland</tissue>
    </source>
</reference>
<protein>
    <recommendedName>
        <fullName evidence="4">Natriuretic peptide PaNP-b</fullName>
    </recommendedName>
</protein>
<organism>
    <name type="scientific">Pseudechis australis</name>
    <name type="common">Mulga snake</name>
    <name type="synonym">King brown snake</name>
    <dbReference type="NCBI Taxonomy" id="8670"/>
    <lineage>
        <taxon>Eukaryota</taxon>
        <taxon>Metazoa</taxon>
        <taxon>Chordata</taxon>
        <taxon>Craniata</taxon>
        <taxon>Vertebrata</taxon>
        <taxon>Euteleostomi</taxon>
        <taxon>Lepidosauria</taxon>
        <taxon>Squamata</taxon>
        <taxon>Bifurcata</taxon>
        <taxon>Unidentata</taxon>
        <taxon>Episquamata</taxon>
        <taxon>Toxicofera</taxon>
        <taxon>Serpentes</taxon>
        <taxon>Colubroidea</taxon>
        <taxon>Elapidae</taxon>
        <taxon>Hydrophiinae</taxon>
        <taxon>Pseudechis</taxon>
    </lineage>
</organism>
<proteinExistence type="evidence at transcript level"/>
<accession>Q3SAF4</accession>
<sequence>SDSKIGDGCFGLPLDHIGSVSGLGCNRPVQNRPKQIPGGS</sequence>
<dbReference type="EMBL" id="DQ116726">
    <property type="protein sequence ID" value="AAZ82821.1"/>
    <property type="molecule type" value="mRNA"/>
</dbReference>
<dbReference type="SMR" id="Q3SAF4"/>
<dbReference type="GO" id="GO:0005576">
    <property type="term" value="C:extracellular region"/>
    <property type="evidence" value="ECO:0007669"/>
    <property type="project" value="UniProtKB-SubCell"/>
</dbReference>
<dbReference type="GO" id="GO:0005179">
    <property type="term" value="F:hormone activity"/>
    <property type="evidence" value="ECO:0007669"/>
    <property type="project" value="InterPro"/>
</dbReference>
<dbReference type="GO" id="GO:0090729">
    <property type="term" value="F:toxin activity"/>
    <property type="evidence" value="ECO:0007669"/>
    <property type="project" value="UniProtKB-KW"/>
</dbReference>
<dbReference type="GO" id="GO:0008217">
    <property type="term" value="P:regulation of blood pressure"/>
    <property type="evidence" value="ECO:0007669"/>
    <property type="project" value="UniProtKB-KW"/>
</dbReference>
<dbReference type="GO" id="GO:0042311">
    <property type="term" value="P:vasodilation"/>
    <property type="evidence" value="ECO:0007669"/>
    <property type="project" value="UniProtKB-KW"/>
</dbReference>
<dbReference type="InterPro" id="IPR000663">
    <property type="entry name" value="Natr_peptide"/>
</dbReference>
<dbReference type="InterPro" id="IPR030480">
    <property type="entry name" value="Natr_peptide_CS"/>
</dbReference>
<dbReference type="Pfam" id="PF00212">
    <property type="entry name" value="ANP"/>
    <property type="match status" value="1"/>
</dbReference>
<dbReference type="SMART" id="SM00183">
    <property type="entry name" value="NAT_PEP"/>
    <property type="match status" value="1"/>
</dbReference>
<dbReference type="PROSITE" id="PS00263">
    <property type="entry name" value="NATRIURETIC_PEPTIDE"/>
    <property type="match status" value="1"/>
</dbReference>